<dbReference type="EMBL" id="AE016795">
    <property type="protein sequence ID" value="AAO09260.1"/>
    <property type="molecule type" value="Genomic_DNA"/>
</dbReference>
<dbReference type="RefSeq" id="WP_011078823.1">
    <property type="nucleotide sequence ID" value="NC_004459.3"/>
</dbReference>
<dbReference type="SMR" id="Q8DE49"/>
<dbReference type="KEGG" id="vvu:VV1_0751"/>
<dbReference type="HOGENOM" id="CLU_095071_2_1_6"/>
<dbReference type="Proteomes" id="UP000002275">
    <property type="component" value="Chromosome 1"/>
</dbReference>
<dbReference type="GO" id="GO:0022625">
    <property type="term" value="C:cytosolic large ribosomal subunit"/>
    <property type="evidence" value="ECO:0007669"/>
    <property type="project" value="TreeGrafter"/>
</dbReference>
<dbReference type="GO" id="GO:0070180">
    <property type="term" value="F:large ribosomal subunit rRNA binding"/>
    <property type="evidence" value="ECO:0007669"/>
    <property type="project" value="TreeGrafter"/>
</dbReference>
<dbReference type="GO" id="GO:0003735">
    <property type="term" value="F:structural constituent of ribosome"/>
    <property type="evidence" value="ECO:0007669"/>
    <property type="project" value="InterPro"/>
</dbReference>
<dbReference type="GO" id="GO:0006412">
    <property type="term" value="P:translation"/>
    <property type="evidence" value="ECO:0007669"/>
    <property type="project" value="UniProtKB-UniRule"/>
</dbReference>
<dbReference type="CDD" id="cd00337">
    <property type="entry name" value="Ribosomal_uL14"/>
    <property type="match status" value="1"/>
</dbReference>
<dbReference type="FunFam" id="2.40.150.20:FF:000001">
    <property type="entry name" value="50S ribosomal protein L14"/>
    <property type="match status" value="1"/>
</dbReference>
<dbReference type="Gene3D" id="2.40.150.20">
    <property type="entry name" value="Ribosomal protein L14"/>
    <property type="match status" value="1"/>
</dbReference>
<dbReference type="HAMAP" id="MF_01367">
    <property type="entry name" value="Ribosomal_uL14"/>
    <property type="match status" value="1"/>
</dbReference>
<dbReference type="InterPro" id="IPR000218">
    <property type="entry name" value="Ribosomal_uL14"/>
</dbReference>
<dbReference type="InterPro" id="IPR005745">
    <property type="entry name" value="Ribosomal_uL14_bac-type"/>
</dbReference>
<dbReference type="InterPro" id="IPR019972">
    <property type="entry name" value="Ribosomal_uL14_CS"/>
</dbReference>
<dbReference type="InterPro" id="IPR036853">
    <property type="entry name" value="Ribosomal_uL14_sf"/>
</dbReference>
<dbReference type="NCBIfam" id="TIGR01067">
    <property type="entry name" value="rplN_bact"/>
    <property type="match status" value="1"/>
</dbReference>
<dbReference type="PANTHER" id="PTHR11761">
    <property type="entry name" value="50S/60S RIBOSOMAL PROTEIN L14/L23"/>
    <property type="match status" value="1"/>
</dbReference>
<dbReference type="PANTHER" id="PTHR11761:SF3">
    <property type="entry name" value="LARGE RIBOSOMAL SUBUNIT PROTEIN UL14M"/>
    <property type="match status" value="1"/>
</dbReference>
<dbReference type="Pfam" id="PF00238">
    <property type="entry name" value="Ribosomal_L14"/>
    <property type="match status" value="1"/>
</dbReference>
<dbReference type="SMART" id="SM01374">
    <property type="entry name" value="Ribosomal_L14"/>
    <property type="match status" value="1"/>
</dbReference>
<dbReference type="SUPFAM" id="SSF50193">
    <property type="entry name" value="Ribosomal protein L14"/>
    <property type="match status" value="1"/>
</dbReference>
<dbReference type="PROSITE" id="PS00049">
    <property type="entry name" value="RIBOSOMAL_L14"/>
    <property type="match status" value="1"/>
</dbReference>
<reference key="1">
    <citation type="submission" date="2002-12" db="EMBL/GenBank/DDBJ databases">
        <title>Complete genome sequence of Vibrio vulnificus CMCP6.</title>
        <authorList>
            <person name="Rhee J.H."/>
            <person name="Kim S.Y."/>
            <person name="Chung S.S."/>
            <person name="Kim J.J."/>
            <person name="Moon Y.H."/>
            <person name="Jeong H."/>
            <person name="Choy H.E."/>
        </authorList>
    </citation>
    <scope>NUCLEOTIDE SEQUENCE [LARGE SCALE GENOMIC DNA]</scope>
    <source>
        <strain>CMCP6</strain>
    </source>
</reference>
<name>RL14_VIBVU</name>
<feature type="chain" id="PRO_0000266581" description="Large ribosomal subunit protein uL14">
    <location>
        <begin position="1"/>
        <end position="123"/>
    </location>
</feature>
<proteinExistence type="inferred from homology"/>
<comment type="function">
    <text evidence="1">Binds to 23S rRNA. Forms part of two intersubunit bridges in the 70S ribosome.</text>
</comment>
<comment type="subunit">
    <text evidence="1">Part of the 50S ribosomal subunit. Forms a cluster with proteins L3 and L19. In the 70S ribosome, L14 and L19 interact and together make contacts with the 16S rRNA in bridges B5 and B8.</text>
</comment>
<comment type="similarity">
    <text evidence="1">Belongs to the universal ribosomal protein uL14 family.</text>
</comment>
<sequence length="123" mass="13568">MIQMQSMLDAADNSGARSVMCIKVLGGSHRRYAHIGDVIKVTVKEAIPRGKVKKGDVLKAVVVRTRKGVRRPDGSVIRFDRNACVLLNNNTEQPIGTRIFGPVTRELRGDKFMKIVSLAPEVL</sequence>
<evidence type="ECO:0000255" key="1">
    <source>
        <dbReference type="HAMAP-Rule" id="MF_01367"/>
    </source>
</evidence>
<evidence type="ECO:0000305" key="2"/>
<keyword id="KW-0687">Ribonucleoprotein</keyword>
<keyword id="KW-0689">Ribosomal protein</keyword>
<keyword id="KW-0694">RNA-binding</keyword>
<keyword id="KW-0699">rRNA-binding</keyword>
<protein>
    <recommendedName>
        <fullName evidence="1">Large ribosomal subunit protein uL14</fullName>
    </recommendedName>
    <alternativeName>
        <fullName evidence="2">50S ribosomal protein L14</fullName>
    </alternativeName>
</protein>
<organism>
    <name type="scientific">Vibrio vulnificus (strain CMCP6)</name>
    <dbReference type="NCBI Taxonomy" id="216895"/>
    <lineage>
        <taxon>Bacteria</taxon>
        <taxon>Pseudomonadati</taxon>
        <taxon>Pseudomonadota</taxon>
        <taxon>Gammaproteobacteria</taxon>
        <taxon>Vibrionales</taxon>
        <taxon>Vibrionaceae</taxon>
        <taxon>Vibrio</taxon>
    </lineage>
</organism>
<gene>
    <name evidence="1" type="primary">rplN</name>
    <name type="ordered locus">VV1_0751</name>
</gene>
<accession>Q8DE49</accession>